<reference key="1">
    <citation type="journal article" date="2001" name="Nature">
        <title>Genome sequence of Yersinia pestis, the causative agent of plague.</title>
        <authorList>
            <person name="Parkhill J."/>
            <person name="Wren B.W."/>
            <person name="Thomson N.R."/>
            <person name="Titball R.W."/>
            <person name="Holden M.T.G."/>
            <person name="Prentice M.B."/>
            <person name="Sebaihia M."/>
            <person name="James K.D."/>
            <person name="Churcher C.M."/>
            <person name="Mungall K.L."/>
            <person name="Baker S."/>
            <person name="Basham D."/>
            <person name="Bentley S.D."/>
            <person name="Brooks K."/>
            <person name="Cerdeno-Tarraga A.-M."/>
            <person name="Chillingworth T."/>
            <person name="Cronin A."/>
            <person name="Davies R.M."/>
            <person name="Davis P."/>
            <person name="Dougan G."/>
            <person name="Feltwell T."/>
            <person name="Hamlin N."/>
            <person name="Holroyd S."/>
            <person name="Jagels K."/>
            <person name="Karlyshev A.V."/>
            <person name="Leather S."/>
            <person name="Moule S."/>
            <person name="Oyston P.C.F."/>
            <person name="Quail M.A."/>
            <person name="Rutherford K.M."/>
            <person name="Simmonds M."/>
            <person name="Skelton J."/>
            <person name="Stevens K."/>
            <person name="Whitehead S."/>
            <person name="Barrell B.G."/>
        </authorList>
    </citation>
    <scope>NUCLEOTIDE SEQUENCE [LARGE SCALE GENOMIC DNA]</scope>
    <source>
        <strain>CO-92 / Biovar Orientalis</strain>
    </source>
</reference>
<reference key="2">
    <citation type="journal article" date="2002" name="J. Bacteriol.">
        <title>Genome sequence of Yersinia pestis KIM.</title>
        <authorList>
            <person name="Deng W."/>
            <person name="Burland V."/>
            <person name="Plunkett G. III"/>
            <person name="Boutin A."/>
            <person name="Mayhew G.F."/>
            <person name="Liss P."/>
            <person name="Perna N.T."/>
            <person name="Rose D.J."/>
            <person name="Mau B."/>
            <person name="Zhou S."/>
            <person name="Schwartz D.C."/>
            <person name="Fetherston J.D."/>
            <person name="Lindler L.E."/>
            <person name="Brubaker R.R."/>
            <person name="Plano G.V."/>
            <person name="Straley S.C."/>
            <person name="McDonough K.A."/>
            <person name="Nilles M.L."/>
            <person name="Matson J.S."/>
            <person name="Blattner F.R."/>
            <person name="Perry R.D."/>
        </authorList>
    </citation>
    <scope>NUCLEOTIDE SEQUENCE [LARGE SCALE GENOMIC DNA]</scope>
    <source>
        <strain>KIM10+ / Biovar Mediaevalis</strain>
    </source>
</reference>
<reference key="3">
    <citation type="journal article" date="2004" name="DNA Res.">
        <title>Complete genome sequence of Yersinia pestis strain 91001, an isolate avirulent to humans.</title>
        <authorList>
            <person name="Song Y."/>
            <person name="Tong Z."/>
            <person name="Wang J."/>
            <person name="Wang L."/>
            <person name="Guo Z."/>
            <person name="Han Y."/>
            <person name="Zhang J."/>
            <person name="Pei D."/>
            <person name="Zhou D."/>
            <person name="Qin H."/>
            <person name="Pang X."/>
            <person name="Han Y."/>
            <person name="Zhai J."/>
            <person name="Li M."/>
            <person name="Cui B."/>
            <person name="Qi Z."/>
            <person name="Jin L."/>
            <person name="Dai R."/>
            <person name="Chen F."/>
            <person name="Li S."/>
            <person name="Ye C."/>
            <person name="Du Z."/>
            <person name="Lin W."/>
            <person name="Wang J."/>
            <person name="Yu J."/>
            <person name="Yang H."/>
            <person name="Wang J."/>
            <person name="Huang P."/>
            <person name="Yang R."/>
        </authorList>
    </citation>
    <scope>NUCLEOTIDE SEQUENCE [LARGE SCALE GENOMIC DNA]</scope>
    <source>
        <strain>91001 / Biovar Mediaevalis</strain>
    </source>
</reference>
<organism>
    <name type="scientific">Yersinia pestis</name>
    <dbReference type="NCBI Taxonomy" id="632"/>
    <lineage>
        <taxon>Bacteria</taxon>
        <taxon>Pseudomonadati</taxon>
        <taxon>Pseudomonadota</taxon>
        <taxon>Gammaproteobacteria</taxon>
        <taxon>Enterobacterales</taxon>
        <taxon>Yersiniaceae</taxon>
        <taxon>Yersinia</taxon>
    </lineage>
</organism>
<comment type="subcellular location">
    <subcellularLocation>
        <location evidence="2">Membrane</location>
        <topology evidence="2">Multi-pass membrane protein</topology>
    </subcellularLocation>
</comment>
<comment type="similarity">
    <text evidence="2">Belongs to the major facilitator superfamily.</text>
</comment>
<evidence type="ECO:0000255" key="1"/>
<evidence type="ECO:0000305" key="2"/>
<protein>
    <recommendedName>
        <fullName>Uncharacterized MFS-type transporter YPO1221/y2967/YP_0917</fullName>
    </recommendedName>
</protein>
<dbReference type="EMBL" id="AL590842">
    <property type="protein sequence ID" value="CAL19881.1"/>
    <property type="molecule type" value="Genomic_DNA"/>
</dbReference>
<dbReference type="EMBL" id="AE009952">
    <property type="protein sequence ID" value="AAM86518.1"/>
    <property type="molecule type" value="Genomic_DNA"/>
</dbReference>
<dbReference type="EMBL" id="AE017042">
    <property type="protein sequence ID" value="AAS61173.1"/>
    <property type="molecule type" value="Genomic_DNA"/>
</dbReference>
<dbReference type="PIR" id="AG0149">
    <property type="entry name" value="AG0149"/>
</dbReference>
<dbReference type="RefSeq" id="WP_002210825.1">
    <property type="nucleotide sequence ID" value="NZ_WUCM01000017.1"/>
</dbReference>
<dbReference type="RefSeq" id="YP_002346253.1">
    <property type="nucleotide sequence ID" value="NC_003143.1"/>
</dbReference>
<dbReference type="SMR" id="Q7CH99"/>
<dbReference type="STRING" id="214092.YPO1221"/>
<dbReference type="PaxDb" id="214092-YPO1221"/>
<dbReference type="EnsemblBacteria" id="AAS61173">
    <property type="protein sequence ID" value="AAS61173"/>
    <property type="gene ID" value="YP_0917"/>
</dbReference>
<dbReference type="KEGG" id="ype:YPO1221"/>
<dbReference type="KEGG" id="ypk:y2967"/>
<dbReference type="KEGG" id="ypm:YP_0917"/>
<dbReference type="PATRIC" id="fig|214092.21.peg.1524"/>
<dbReference type="eggNOG" id="COG2223">
    <property type="taxonomic scope" value="Bacteria"/>
</dbReference>
<dbReference type="HOGENOM" id="CLU_035309_1_0_6"/>
<dbReference type="OMA" id="TMGYSGI"/>
<dbReference type="OrthoDB" id="9810941at2"/>
<dbReference type="Proteomes" id="UP000000815">
    <property type="component" value="Chromosome"/>
</dbReference>
<dbReference type="Proteomes" id="UP000001019">
    <property type="component" value="Chromosome"/>
</dbReference>
<dbReference type="Proteomes" id="UP000002490">
    <property type="component" value="Chromosome"/>
</dbReference>
<dbReference type="GO" id="GO:0016020">
    <property type="term" value="C:membrane"/>
    <property type="evidence" value="ECO:0000318"/>
    <property type="project" value="GO_Central"/>
</dbReference>
<dbReference type="GO" id="GO:0022857">
    <property type="term" value="F:transmembrane transporter activity"/>
    <property type="evidence" value="ECO:0007669"/>
    <property type="project" value="InterPro"/>
</dbReference>
<dbReference type="CDD" id="cd17393">
    <property type="entry name" value="MFS_MosC_like"/>
    <property type="match status" value="1"/>
</dbReference>
<dbReference type="FunFam" id="1.20.1250.20:FF:000438">
    <property type="entry name" value="Major facilitator transporter"/>
    <property type="match status" value="1"/>
</dbReference>
<dbReference type="FunFam" id="1.20.1250.20:FF:000491">
    <property type="entry name" value="Major facilitator transporter"/>
    <property type="match status" value="1"/>
</dbReference>
<dbReference type="Gene3D" id="1.20.1250.20">
    <property type="entry name" value="MFS general substrate transporter like domains"/>
    <property type="match status" value="2"/>
</dbReference>
<dbReference type="InterPro" id="IPR011701">
    <property type="entry name" value="MFS"/>
</dbReference>
<dbReference type="InterPro" id="IPR020846">
    <property type="entry name" value="MFS_dom"/>
</dbReference>
<dbReference type="InterPro" id="IPR036259">
    <property type="entry name" value="MFS_trans_sf"/>
</dbReference>
<dbReference type="InterPro" id="IPR051788">
    <property type="entry name" value="MFS_Transporter"/>
</dbReference>
<dbReference type="PANTHER" id="PTHR23514">
    <property type="entry name" value="BYPASS OF STOP CODON PROTEIN 6"/>
    <property type="match status" value="1"/>
</dbReference>
<dbReference type="PANTHER" id="PTHR23514:SF13">
    <property type="entry name" value="INNER MEMBRANE PROTEIN YBJJ"/>
    <property type="match status" value="1"/>
</dbReference>
<dbReference type="Pfam" id="PF07690">
    <property type="entry name" value="MFS_1"/>
    <property type="match status" value="1"/>
</dbReference>
<dbReference type="SUPFAM" id="SSF103473">
    <property type="entry name" value="MFS general substrate transporter"/>
    <property type="match status" value="1"/>
</dbReference>
<dbReference type="PROSITE" id="PS50850">
    <property type="entry name" value="MFS"/>
    <property type="match status" value="1"/>
</dbReference>
<proteinExistence type="inferred from homology"/>
<accession>Q7CH99</accession>
<accession>Q74WF4</accession>
<name>Y1221_YERPE</name>
<feature type="chain" id="PRO_0000273017" description="Uncharacterized MFS-type transporter YPO1221/y2967/YP_0917">
    <location>
        <begin position="1"/>
        <end position="384"/>
    </location>
</feature>
<feature type="transmembrane region" description="Helical" evidence="1">
    <location>
        <begin position="22"/>
        <end position="42"/>
    </location>
</feature>
<feature type="transmembrane region" description="Helical" evidence="1">
    <location>
        <begin position="52"/>
        <end position="72"/>
    </location>
</feature>
<feature type="transmembrane region" description="Helical" evidence="1">
    <location>
        <begin position="81"/>
        <end position="101"/>
    </location>
</feature>
<feature type="transmembrane region" description="Helical" evidence="1">
    <location>
        <begin position="106"/>
        <end position="126"/>
    </location>
</feature>
<feature type="transmembrane region" description="Helical" evidence="1">
    <location>
        <begin position="143"/>
        <end position="163"/>
    </location>
</feature>
<feature type="transmembrane region" description="Helical" evidence="1">
    <location>
        <begin position="164"/>
        <end position="184"/>
    </location>
</feature>
<feature type="transmembrane region" description="Helical" evidence="1">
    <location>
        <begin position="202"/>
        <end position="222"/>
    </location>
</feature>
<feature type="transmembrane region" description="Helical" evidence="1">
    <location>
        <begin position="240"/>
        <end position="260"/>
    </location>
</feature>
<feature type="transmembrane region" description="Helical" evidence="1">
    <location>
        <begin position="276"/>
        <end position="296"/>
    </location>
</feature>
<feature type="transmembrane region" description="Helical" evidence="1">
    <location>
        <begin position="299"/>
        <end position="319"/>
    </location>
</feature>
<feature type="transmembrane region" description="Helical" evidence="1">
    <location>
        <begin position="327"/>
        <end position="347"/>
    </location>
</feature>
<feature type="transmembrane region" description="Helical" evidence="1">
    <location>
        <begin position="352"/>
        <end position="372"/>
    </location>
</feature>
<gene>
    <name type="ordered locus">YPO1221</name>
    <name type="ordered locus">y2967</name>
    <name type="ordered locus">YP_0917</name>
    <name type="ORF">YPO1220</name>
</gene>
<sequence length="384" mass="39368">MSTKIHQQAVQPGISQQVSTRLAFFIAGLGMAAWAPLVPFAKARIGLNDASLGLLLLCIGIGSMLAMPLTGVLTAKWGCRAVILLAGAVLCLDLPLLVLMNTPATMAIALLVFGAAMGIIDVAMNIQAVIVEKASGRAMMSGFHGLFSVGGIVGAGGVSALLWLGLNPLTAIMATVVLMIILLLAANKNLLRGSGEPHDGPLFVFPRGWVMFIGFLCFVMFLAEGSMLDWSAVFLTTLRGMSPSQAGMGYAVFAIAMTLGRLNGDRIVNGLGRYKVLLGGSLCSAIGIIIAISIDSSMAAIIGFMLVGFGASNVVPILFTAAGNQTVMPANLAVASITTIGYAGILAGPAAIGFIAQLSSLSVAFGCVALLLLTVAASARAVTR</sequence>
<keyword id="KW-0472">Membrane</keyword>
<keyword id="KW-1185">Reference proteome</keyword>
<keyword id="KW-0812">Transmembrane</keyword>
<keyword id="KW-1133">Transmembrane helix</keyword>
<keyword id="KW-0813">Transport</keyword>